<gene>
    <name type="primary">hyaC</name>
    <name type="ordered locus">Z1391</name>
    <name type="ordered locus">ECs1130</name>
</gene>
<accession>P0AAM2</accession>
<accession>P19929</accession>
<sequence>MQQKSDNVVSHYVFEAPVRIWHWLTVLCMAVLMVTGYFIGKPLPSVSGEATYLFYMGYIRLIHFSAGMVFTVVLLMRIYWAFVGNRYSRELFIVPVWRKSWWQGVWYEIRWYLFLAKRPSADIGHNPIAQAAMFGYFLMSVFMIITGFALYSEHSQYAIFAPFRYVVEFFYWTGGNSMDIHSWHRLGMWLIGAFVIGHVYMALREDIMSDDTVISTMVNGYRSHKFGKISNKERS</sequence>
<reference key="1">
    <citation type="journal article" date="2001" name="Nature">
        <title>Genome sequence of enterohaemorrhagic Escherichia coli O157:H7.</title>
        <authorList>
            <person name="Perna N.T."/>
            <person name="Plunkett G. III"/>
            <person name="Burland V."/>
            <person name="Mau B."/>
            <person name="Glasner J.D."/>
            <person name="Rose D.J."/>
            <person name="Mayhew G.F."/>
            <person name="Evans P.S."/>
            <person name="Gregor J."/>
            <person name="Kirkpatrick H.A."/>
            <person name="Posfai G."/>
            <person name="Hackett J."/>
            <person name="Klink S."/>
            <person name="Boutin A."/>
            <person name="Shao Y."/>
            <person name="Miller L."/>
            <person name="Grotbeck E.J."/>
            <person name="Davis N.W."/>
            <person name="Lim A."/>
            <person name="Dimalanta E.T."/>
            <person name="Potamousis K."/>
            <person name="Apodaca J."/>
            <person name="Anantharaman T.S."/>
            <person name="Lin J."/>
            <person name="Yen G."/>
            <person name="Schwartz D.C."/>
            <person name="Welch R.A."/>
            <person name="Blattner F.R."/>
        </authorList>
    </citation>
    <scope>NUCLEOTIDE SEQUENCE [LARGE SCALE GENOMIC DNA]</scope>
    <source>
        <strain>O157:H7 / EDL933 / ATCC 700927 / EHEC</strain>
    </source>
</reference>
<reference key="2">
    <citation type="journal article" date="2001" name="DNA Res.">
        <title>Complete genome sequence of enterohemorrhagic Escherichia coli O157:H7 and genomic comparison with a laboratory strain K-12.</title>
        <authorList>
            <person name="Hayashi T."/>
            <person name="Makino K."/>
            <person name="Ohnishi M."/>
            <person name="Kurokawa K."/>
            <person name="Ishii K."/>
            <person name="Yokoyama K."/>
            <person name="Han C.-G."/>
            <person name="Ohtsubo E."/>
            <person name="Nakayama K."/>
            <person name="Murata T."/>
            <person name="Tanaka M."/>
            <person name="Tobe T."/>
            <person name="Iida T."/>
            <person name="Takami H."/>
            <person name="Honda T."/>
            <person name="Sasakawa C."/>
            <person name="Ogasawara N."/>
            <person name="Yasunaga T."/>
            <person name="Kuhara S."/>
            <person name="Shiba T."/>
            <person name="Hattori M."/>
            <person name="Shinagawa H."/>
        </authorList>
    </citation>
    <scope>NUCLEOTIDE SEQUENCE [LARGE SCALE GENOMIC DNA]</scope>
    <source>
        <strain>O157:H7 / Sakai / RIMD 0509952 / EHEC</strain>
    </source>
</reference>
<dbReference type="EMBL" id="AE005174">
    <property type="protein sequence ID" value="AAG55522.1"/>
    <property type="molecule type" value="Genomic_DNA"/>
</dbReference>
<dbReference type="EMBL" id="BA000007">
    <property type="protein sequence ID" value="BAB34553.1"/>
    <property type="molecule type" value="Genomic_DNA"/>
</dbReference>
<dbReference type="PIR" id="B90770">
    <property type="entry name" value="B90770"/>
</dbReference>
<dbReference type="PIR" id="F85632">
    <property type="entry name" value="F85632"/>
</dbReference>
<dbReference type="RefSeq" id="NP_309157.1">
    <property type="nucleotide sequence ID" value="NC_002695.1"/>
</dbReference>
<dbReference type="RefSeq" id="WP_001186424.1">
    <property type="nucleotide sequence ID" value="NZ_VOAI01000025.1"/>
</dbReference>
<dbReference type="SMR" id="P0AAM2"/>
<dbReference type="STRING" id="155864.Z1391"/>
<dbReference type="GeneID" id="75171048"/>
<dbReference type="GeneID" id="912637"/>
<dbReference type="KEGG" id="ece:Z1391"/>
<dbReference type="KEGG" id="ecs:ECs_1130"/>
<dbReference type="PATRIC" id="fig|386585.9.peg.1245"/>
<dbReference type="eggNOG" id="COG1969">
    <property type="taxonomic scope" value="Bacteria"/>
</dbReference>
<dbReference type="HOGENOM" id="CLU_075520_0_0_6"/>
<dbReference type="OMA" id="IEEIYVW"/>
<dbReference type="Proteomes" id="UP000000558">
    <property type="component" value="Chromosome"/>
</dbReference>
<dbReference type="Proteomes" id="UP000002519">
    <property type="component" value="Chromosome"/>
</dbReference>
<dbReference type="GO" id="GO:0005886">
    <property type="term" value="C:plasma membrane"/>
    <property type="evidence" value="ECO:0007669"/>
    <property type="project" value="UniProtKB-SubCell"/>
</dbReference>
<dbReference type="GO" id="GO:0009055">
    <property type="term" value="F:electron transfer activity"/>
    <property type="evidence" value="ECO:0007669"/>
    <property type="project" value="InterPro"/>
</dbReference>
<dbReference type="GO" id="GO:0020037">
    <property type="term" value="F:heme binding"/>
    <property type="evidence" value="ECO:0007669"/>
    <property type="project" value="TreeGrafter"/>
</dbReference>
<dbReference type="GO" id="GO:0005506">
    <property type="term" value="F:iron ion binding"/>
    <property type="evidence" value="ECO:0007669"/>
    <property type="project" value="InterPro"/>
</dbReference>
<dbReference type="GO" id="GO:0022904">
    <property type="term" value="P:respiratory electron transport chain"/>
    <property type="evidence" value="ECO:0007669"/>
    <property type="project" value="InterPro"/>
</dbReference>
<dbReference type="FunFam" id="1.20.950.20:FF:000003">
    <property type="entry name" value="Ni/Fe-hydrogenase 1 b-type cytochrome subunit"/>
    <property type="match status" value="1"/>
</dbReference>
<dbReference type="Gene3D" id="1.20.950.20">
    <property type="entry name" value="Transmembrane di-heme cytochromes, Chain C"/>
    <property type="match status" value="1"/>
</dbReference>
<dbReference type="InterPro" id="IPR011577">
    <property type="entry name" value="Cyt_b561_bac/Ni-Hgenase"/>
</dbReference>
<dbReference type="InterPro" id="IPR016174">
    <property type="entry name" value="Di-haem_cyt_TM"/>
</dbReference>
<dbReference type="InterPro" id="IPR051542">
    <property type="entry name" value="Hydrogenase_cytochrome"/>
</dbReference>
<dbReference type="InterPro" id="IPR000516">
    <property type="entry name" value="Ni-dep_Hydgase_cyt-B"/>
</dbReference>
<dbReference type="NCBIfam" id="TIGR02125">
    <property type="entry name" value="CytB-hydogenase"/>
    <property type="match status" value="1"/>
</dbReference>
<dbReference type="NCBIfam" id="NF007551">
    <property type="entry name" value="PRK10171.1"/>
    <property type="match status" value="1"/>
</dbReference>
<dbReference type="PANTHER" id="PTHR30485">
    <property type="entry name" value="NI/FE-HYDROGENASE 1 B-TYPE CYTOCHROME SUBUNIT"/>
    <property type="match status" value="1"/>
</dbReference>
<dbReference type="PANTHER" id="PTHR30485:SF0">
    <property type="entry name" value="NI_FE-HYDROGENASE 1 B-TYPE CYTOCHROME SUBUNIT-RELATED"/>
    <property type="match status" value="1"/>
</dbReference>
<dbReference type="Pfam" id="PF01292">
    <property type="entry name" value="Ni_hydr_CYTB"/>
    <property type="match status" value="1"/>
</dbReference>
<dbReference type="PRINTS" id="PR00161">
    <property type="entry name" value="NIHGNASECYTB"/>
</dbReference>
<dbReference type="SUPFAM" id="SSF81342">
    <property type="entry name" value="Transmembrane di-heme cytochromes"/>
    <property type="match status" value="1"/>
</dbReference>
<dbReference type="PROSITE" id="PS00882">
    <property type="entry name" value="NI_HGENASE_CYTB_1"/>
    <property type="match status" value="1"/>
</dbReference>
<dbReference type="PROSITE" id="PS00883">
    <property type="entry name" value="NI_HGENASE_CYTB_2"/>
    <property type="match status" value="1"/>
</dbReference>
<keyword id="KW-0997">Cell inner membrane</keyword>
<keyword id="KW-1003">Cell membrane</keyword>
<keyword id="KW-0249">Electron transport</keyword>
<keyword id="KW-0349">Heme</keyword>
<keyword id="KW-0408">Iron</keyword>
<keyword id="KW-0472">Membrane</keyword>
<keyword id="KW-0479">Metal-binding</keyword>
<keyword id="KW-1185">Reference proteome</keyword>
<keyword id="KW-0812">Transmembrane</keyword>
<keyword id="KW-1133">Transmembrane helix</keyword>
<keyword id="KW-0813">Transport</keyword>
<feature type="chain" id="PRO_0000201385" description="Probable Ni/Fe-hydrogenase 1 B-type cytochrome subunit">
    <location>
        <begin position="1"/>
        <end position="235"/>
    </location>
</feature>
<feature type="topological domain" description="Cytoplasmic" evidence="2">
    <location>
        <begin position="1"/>
        <end position="19"/>
    </location>
</feature>
<feature type="transmembrane region" description="Helical" evidence="2">
    <location>
        <begin position="20"/>
        <end position="40"/>
    </location>
</feature>
<feature type="topological domain" description="Periplasmic" evidence="2">
    <location>
        <begin position="41"/>
        <end position="63"/>
    </location>
</feature>
<feature type="transmembrane region" description="Helical" evidence="2">
    <location>
        <begin position="64"/>
        <end position="84"/>
    </location>
</feature>
<feature type="topological domain" description="Cytoplasmic" evidence="2">
    <location>
        <begin position="85"/>
        <end position="130"/>
    </location>
</feature>
<feature type="transmembrane region" description="Helical" evidence="2">
    <location>
        <begin position="131"/>
        <end position="151"/>
    </location>
</feature>
<feature type="topological domain" description="Periplasmic" evidence="2">
    <location>
        <begin position="152"/>
        <end position="185"/>
    </location>
</feature>
<feature type="transmembrane region" description="Helical" evidence="2">
    <location>
        <begin position="186"/>
        <end position="203"/>
    </location>
</feature>
<feature type="topological domain" description="Cytoplasmic" evidence="2">
    <location>
        <begin position="204"/>
        <end position="235"/>
    </location>
</feature>
<protein>
    <recommendedName>
        <fullName>Probable Ni/Fe-hydrogenase 1 B-type cytochrome subunit</fullName>
    </recommendedName>
</protein>
<comment type="function">
    <text evidence="1">Probable b-type cytochrome.</text>
</comment>
<comment type="subcellular location">
    <subcellularLocation>
        <location evidence="1">Cell inner membrane</location>
        <topology evidence="1">Multi-pass membrane protein</topology>
    </subcellularLocation>
</comment>
<comment type="similarity">
    <text evidence="3">Belongs to the HupC/HyaC/HydC family.</text>
</comment>
<evidence type="ECO:0000250" key="1"/>
<evidence type="ECO:0000255" key="2"/>
<evidence type="ECO:0000305" key="3"/>
<name>CYBH_ECO57</name>
<proteinExistence type="inferred from homology"/>
<organism>
    <name type="scientific">Escherichia coli O157:H7</name>
    <dbReference type="NCBI Taxonomy" id="83334"/>
    <lineage>
        <taxon>Bacteria</taxon>
        <taxon>Pseudomonadati</taxon>
        <taxon>Pseudomonadota</taxon>
        <taxon>Gammaproteobacteria</taxon>
        <taxon>Enterobacterales</taxon>
        <taxon>Enterobacteriaceae</taxon>
        <taxon>Escherichia</taxon>
    </lineage>
</organism>